<evidence type="ECO:0000250" key="1"/>
<evidence type="ECO:0000255" key="2"/>
<evidence type="ECO:0000305" key="3"/>
<name>WAXS2_ARATH</name>
<protein>
    <recommendedName>
        <fullName>Probable long-chain-alcohol O-fatty-acyltransferase 2</fullName>
        <ecNumber>2.3.1.75</ecNumber>
    </recommendedName>
    <alternativeName>
        <fullName>Wax synthase 2</fullName>
    </alternativeName>
</protein>
<gene>
    <name type="primary">AT2</name>
    <name type="ordered locus">At5g55370</name>
    <name type="ORF">MTE17.8</name>
</gene>
<feature type="chain" id="PRO_0000380678" description="Probable long-chain-alcohol O-fatty-acyltransferase 2">
    <location>
        <begin position="1"/>
        <end position="343"/>
    </location>
</feature>
<feature type="transmembrane region" description="Helical" evidence="2">
    <location>
        <begin position="7"/>
        <end position="27"/>
    </location>
</feature>
<feature type="transmembrane region" description="Helical" evidence="2">
    <location>
        <begin position="36"/>
        <end position="56"/>
    </location>
</feature>
<feature type="transmembrane region" description="Helical" evidence="2">
    <location>
        <begin position="58"/>
        <end position="78"/>
    </location>
</feature>
<feature type="transmembrane region" description="Helical" evidence="2">
    <location>
        <begin position="117"/>
        <end position="137"/>
    </location>
</feature>
<feature type="transmembrane region" description="Helical" evidence="2">
    <location>
        <begin position="148"/>
        <end position="168"/>
    </location>
</feature>
<feature type="transmembrane region" description="Helical" evidence="2">
    <location>
        <begin position="235"/>
        <end position="255"/>
    </location>
</feature>
<feature type="transmembrane region" description="Helical" evidence="2">
    <location>
        <begin position="260"/>
        <end position="280"/>
    </location>
</feature>
<feature type="transmembrane region" description="Helical" evidence="2">
    <location>
        <begin position="292"/>
        <end position="312"/>
    </location>
</feature>
<sequence>MEEELRNLIKVWISALISISYCYYISSKISKGVLRLLSLLPIFIIFLLLPLFFSSVHFCVISGFFFTWLANFKLFLFAFDQEPLSPLPSNLTRFFCFACFPIKINKNPSSNRIHNKPMSKWVLAFKLLIFSFLLHVYRNNYDSGLSRFAFLALFTIHVYLEAELILVFVGALMSMLLGCEMEPVFNDPYLATSLQEFWSRRWNLMVPAVLRPAVHIPVQRFCAPLLGLHRAFYAGMLATFIVSGLMHELIYFYVIRKSPTWEVTCFFLLHGVVTCLEIAMKRMRWLPTPRRAVSGLAITVFLLVTAGWLFYPQMLRNDVHKRVISECLLVIDVVKRHVVCILM</sequence>
<organism>
    <name type="scientific">Arabidopsis thaliana</name>
    <name type="common">Mouse-ear cress</name>
    <dbReference type="NCBI Taxonomy" id="3702"/>
    <lineage>
        <taxon>Eukaryota</taxon>
        <taxon>Viridiplantae</taxon>
        <taxon>Streptophyta</taxon>
        <taxon>Embryophyta</taxon>
        <taxon>Tracheophyta</taxon>
        <taxon>Spermatophyta</taxon>
        <taxon>Magnoliopsida</taxon>
        <taxon>eudicotyledons</taxon>
        <taxon>Gunneridae</taxon>
        <taxon>Pentapetalae</taxon>
        <taxon>rosids</taxon>
        <taxon>malvids</taxon>
        <taxon>Brassicales</taxon>
        <taxon>Brassicaceae</taxon>
        <taxon>Camelineae</taxon>
        <taxon>Arabidopsis</taxon>
    </lineage>
</organism>
<reference key="1">
    <citation type="journal article" date="1998" name="DNA Res.">
        <title>Structural analysis of Arabidopsis thaliana chromosome 5. VII. Sequence features of the regions of 1,013,767 bp covered by sixteen physically assigned P1 and TAC clones.</title>
        <authorList>
            <person name="Nakamura Y."/>
            <person name="Sato S."/>
            <person name="Asamizu E."/>
            <person name="Kaneko T."/>
            <person name="Kotani H."/>
            <person name="Miyajima N."/>
            <person name="Tabata S."/>
        </authorList>
    </citation>
    <scope>NUCLEOTIDE SEQUENCE [LARGE SCALE GENOMIC DNA]</scope>
    <source>
        <strain>cv. Columbia</strain>
    </source>
</reference>
<reference key="2">
    <citation type="journal article" date="2017" name="Plant J.">
        <title>Araport11: a complete reannotation of the Arabidopsis thaliana reference genome.</title>
        <authorList>
            <person name="Cheng C.Y."/>
            <person name="Krishnakumar V."/>
            <person name="Chan A.P."/>
            <person name="Thibaud-Nissen F."/>
            <person name="Schobel S."/>
            <person name="Town C.D."/>
        </authorList>
    </citation>
    <scope>GENOME REANNOTATION</scope>
    <source>
        <strain>cv. Columbia</strain>
    </source>
</reference>
<reference key="3">
    <citation type="journal article" date="2000" name="Plant Physiol.">
        <title>Purification of a jojoba embryo wax synthase, cloning of its cDNA, and production of high levels of wax in seeds of transgenic arabidopsis.</title>
        <authorList>
            <person name="Lardizabal K.D."/>
            <person name="Metz J.G."/>
            <person name="Sakamoto T."/>
            <person name="Hutton W.C."/>
            <person name="Pollard M.R."/>
            <person name="Lassner M.W."/>
        </authorList>
    </citation>
    <scope>IDENTIFICATION</scope>
</reference>
<dbReference type="EC" id="2.3.1.75"/>
<dbReference type="EMBL" id="AB015479">
    <property type="protein sequence ID" value="BAB08554.1"/>
    <property type="molecule type" value="Genomic_DNA"/>
</dbReference>
<dbReference type="EMBL" id="CP002688">
    <property type="protein sequence ID" value="AED96621.1"/>
    <property type="molecule type" value="Genomic_DNA"/>
</dbReference>
<dbReference type="RefSeq" id="NP_200348.1">
    <property type="nucleotide sequence ID" value="NM_124919.2"/>
</dbReference>
<dbReference type="STRING" id="3702.Q9FJ73"/>
<dbReference type="PaxDb" id="3702-AT5G55370.1"/>
<dbReference type="EnsemblPlants" id="AT5G55370.1">
    <property type="protein sequence ID" value="AT5G55370.1"/>
    <property type="gene ID" value="AT5G55370"/>
</dbReference>
<dbReference type="GeneID" id="835630"/>
<dbReference type="Gramene" id="AT5G55370.1">
    <property type="protein sequence ID" value="AT5G55370.1"/>
    <property type="gene ID" value="AT5G55370"/>
</dbReference>
<dbReference type="KEGG" id="ath:AT5G55370"/>
<dbReference type="Araport" id="AT5G55370"/>
<dbReference type="TAIR" id="AT5G55370">
    <property type="gene designation" value="AT2"/>
</dbReference>
<dbReference type="eggNOG" id="ENOG502SFJV">
    <property type="taxonomic scope" value="Eukaryota"/>
</dbReference>
<dbReference type="HOGENOM" id="CLU_045902_0_0_1"/>
<dbReference type="InParanoid" id="Q9FJ73"/>
<dbReference type="OMA" id="YYISFRA"/>
<dbReference type="OrthoDB" id="1077582at2759"/>
<dbReference type="PhylomeDB" id="Q9FJ73"/>
<dbReference type="BioCyc" id="ARA:AT5G55370-MONOMER"/>
<dbReference type="BRENDA" id="2.3.1.75">
    <property type="organism ID" value="399"/>
</dbReference>
<dbReference type="PRO" id="PR:Q9FJ73"/>
<dbReference type="Proteomes" id="UP000006548">
    <property type="component" value="Chromosome 5"/>
</dbReference>
<dbReference type="ExpressionAtlas" id="Q9FJ73">
    <property type="expression patterns" value="baseline and differential"/>
</dbReference>
<dbReference type="GO" id="GO:0016020">
    <property type="term" value="C:membrane"/>
    <property type="evidence" value="ECO:0007669"/>
    <property type="project" value="UniProtKB-SubCell"/>
</dbReference>
<dbReference type="GO" id="GO:0047196">
    <property type="term" value="F:long-chain-alcohol O-fatty-acyltransferase activity"/>
    <property type="evidence" value="ECO:0007669"/>
    <property type="project" value="UniProtKB-EC"/>
</dbReference>
<dbReference type="GO" id="GO:0006629">
    <property type="term" value="P:lipid metabolic process"/>
    <property type="evidence" value="ECO:0007669"/>
    <property type="project" value="UniProtKB-KW"/>
</dbReference>
<dbReference type="InterPro" id="IPR044851">
    <property type="entry name" value="Wax_synthase"/>
</dbReference>
<dbReference type="InterPro" id="IPR032805">
    <property type="entry name" value="Wax_synthase_dom"/>
</dbReference>
<dbReference type="InterPro" id="IPR017088">
    <property type="entry name" value="Wax_synthase_Magnoliopsida"/>
</dbReference>
<dbReference type="PANTHER" id="PTHR31595:SF36">
    <property type="entry name" value="LONG-CHAIN-ALCOHOL O-FATTY-ACYLTRANSFERASE 2-RELATED"/>
    <property type="match status" value="1"/>
</dbReference>
<dbReference type="PANTHER" id="PTHR31595">
    <property type="entry name" value="LONG-CHAIN-ALCOHOL O-FATTY-ACYLTRANSFERASE 3-RELATED"/>
    <property type="match status" value="1"/>
</dbReference>
<dbReference type="Pfam" id="PF13813">
    <property type="entry name" value="MBOAT_2"/>
    <property type="match status" value="1"/>
</dbReference>
<dbReference type="PIRSF" id="PIRSF037006">
    <property type="entry name" value="Wax_synthase"/>
    <property type="match status" value="1"/>
</dbReference>
<proteinExistence type="inferred from homology"/>
<comment type="function">
    <text evidence="1">Catalyzes the final step in the synthesis of long-chain linear esters (waxes).</text>
</comment>
<comment type="catalytic activity">
    <reaction>
        <text>a long chain fatty alcohol + a fatty acyl-CoA = a wax ester + CoA</text>
        <dbReference type="Rhea" id="RHEA:38443"/>
        <dbReference type="ChEBI" id="CHEBI:10036"/>
        <dbReference type="ChEBI" id="CHEBI:17135"/>
        <dbReference type="ChEBI" id="CHEBI:57287"/>
        <dbReference type="ChEBI" id="CHEBI:77636"/>
        <dbReference type="EC" id="2.3.1.75"/>
    </reaction>
</comment>
<comment type="subcellular location">
    <subcellularLocation>
        <location evidence="3">Membrane</location>
        <topology evidence="3">Multi-pass membrane protein</topology>
    </subcellularLocation>
</comment>
<comment type="similarity">
    <text evidence="3">Belongs to the wax synthase family.</text>
</comment>
<accession>Q9FJ73</accession>
<keyword id="KW-0012">Acyltransferase</keyword>
<keyword id="KW-0444">Lipid biosynthesis</keyword>
<keyword id="KW-0443">Lipid metabolism</keyword>
<keyword id="KW-0472">Membrane</keyword>
<keyword id="KW-1185">Reference proteome</keyword>
<keyword id="KW-0808">Transferase</keyword>
<keyword id="KW-0812">Transmembrane</keyword>
<keyword id="KW-1133">Transmembrane helix</keyword>